<protein>
    <recommendedName>
        <fullName evidence="5">Solute carrier family 2, facilitated glucose transporter member 2</fullName>
    </recommendedName>
    <alternativeName>
        <fullName evidence="1">Glucose transporter type 2, liver</fullName>
        <shortName evidence="4">GLUT-2</shortName>
    </alternativeName>
</protein>
<sequence length="533" mass="57699">MDGKSKMQAEKHLTGTLVLSVFTAVLGFFQYGYSLGVINAPQKVIEAHYGRMLGAIPMVRHATNTSRDNATITVTIPGTEAWGSSEGTLAPSAGFEDPTVSPHILTMYWSLSVSMFAVGGMVSSFTVGWIGDRLGRVKAMLVVNVLSIAGNLLMGLAKMGPSHILIIAGRAITGLYCGLSSGLVPMYVSEVSPTALRGALGTLHQLAIVTGILISQVLGLDFLLGNDELWPLLLGLSGVAALLQFFLLLLCPESPRYLYIKLGKVEEAKKSLKRLRGNCDPMKEIAEMEKEKQEAASEKRVSIGQLFSSSKYRQAVIVALMVQISQQFSGINAIFYYSTNIFQRAGVGQPVYATIGVGVVNTVFTVISVFLVEKAGRRSLFLAGLMGMLISAVAMTVGLVLLSQFAWMSYVSMVAIFLFVIFFEVGPGPIPWFIVAELFSQGPRPAAIAVAGFCNWACNFIVGMCFQYIADLCGPYVFVVFAVLLLVFFLFAYLKVPETKGKSFEEIAAAFRRKKLPAKSMTELEDLRGGEEA</sequence>
<gene>
    <name evidence="1" type="primary">SLC2A2</name>
    <name evidence="4" type="synonym">GLUT2</name>
</gene>
<reference key="1">
    <citation type="journal article" date="1994" name="Arch. Biochem. Biophys.">
        <title>Identification of chicken liver glucose transporter.</title>
        <authorList>
            <person name="Wang M.Y."/>
            <person name="Tsai M.Y."/>
            <person name="Wang C."/>
        </authorList>
    </citation>
    <scope>NUCLEOTIDE SEQUENCE [MRNA]</scope>
    <source>
        <tissue>Liver</tissue>
    </source>
</reference>
<organism>
    <name type="scientific">Gallus gallus</name>
    <name type="common">Chicken</name>
    <dbReference type="NCBI Taxonomy" id="9031"/>
    <lineage>
        <taxon>Eukaryota</taxon>
        <taxon>Metazoa</taxon>
        <taxon>Chordata</taxon>
        <taxon>Craniata</taxon>
        <taxon>Vertebrata</taxon>
        <taxon>Euteleostomi</taxon>
        <taxon>Archelosauria</taxon>
        <taxon>Archosauria</taxon>
        <taxon>Dinosauria</taxon>
        <taxon>Saurischia</taxon>
        <taxon>Theropoda</taxon>
        <taxon>Coelurosauria</taxon>
        <taxon>Aves</taxon>
        <taxon>Neognathae</taxon>
        <taxon>Galloanserae</taxon>
        <taxon>Galliformes</taxon>
        <taxon>Phasianidae</taxon>
        <taxon>Phasianinae</taxon>
        <taxon>Gallus</taxon>
    </lineage>
</organism>
<name>GTR2_CHICK</name>
<evidence type="ECO:0000250" key="1">
    <source>
        <dbReference type="UniProtKB" id="P11168"/>
    </source>
</evidence>
<evidence type="ECO:0000250" key="2">
    <source>
        <dbReference type="UniProtKB" id="P11169"/>
    </source>
</evidence>
<evidence type="ECO:0000255" key="3"/>
<evidence type="ECO:0000303" key="4">
    <source>
    </source>
</evidence>
<evidence type="ECO:0000305" key="5"/>
<proteinExistence type="evidence at transcript level"/>
<feature type="chain" id="PRO_0000050350" description="Solute carrier family 2, facilitated glucose transporter member 2">
    <location>
        <begin position="1"/>
        <end position="533"/>
    </location>
</feature>
<feature type="topological domain" description="Cytoplasmic" evidence="3">
    <location>
        <begin position="1"/>
        <end position="17"/>
    </location>
</feature>
<feature type="transmembrane region" description="Helical; Name=1" evidence="3">
    <location>
        <begin position="18"/>
        <end position="38"/>
    </location>
</feature>
<feature type="topological domain" description="Extracellular" evidence="3">
    <location>
        <begin position="39"/>
        <end position="110"/>
    </location>
</feature>
<feature type="transmembrane region" description="Helical; Name=2" evidence="3">
    <location>
        <begin position="111"/>
        <end position="131"/>
    </location>
</feature>
<feature type="topological domain" description="Cytoplasmic" evidence="3">
    <location>
        <begin position="132"/>
        <end position="136"/>
    </location>
</feature>
<feature type="transmembrane region" description="Helical; Name=3" evidence="3">
    <location>
        <begin position="137"/>
        <end position="157"/>
    </location>
</feature>
<feature type="topological domain" description="Extracellular" evidence="3">
    <location>
        <begin position="158"/>
        <end position="163"/>
    </location>
</feature>
<feature type="transmembrane region" description="Helical; Name=4" evidence="3">
    <location>
        <begin position="164"/>
        <end position="184"/>
    </location>
</feature>
<feature type="topological domain" description="Cytoplasmic" evidence="3">
    <location>
        <begin position="185"/>
        <end position="199"/>
    </location>
</feature>
<feature type="transmembrane region" description="Helical; Name=5" evidence="3">
    <location>
        <begin position="200"/>
        <end position="220"/>
    </location>
</feature>
<feature type="topological domain" description="Extracellular" evidence="3">
    <location>
        <begin position="221"/>
        <end position="229"/>
    </location>
</feature>
<feature type="transmembrane region" description="Helical; Name=6" evidence="3">
    <location>
        <begin position="230"/>
        <end position="250"/>
    </location>
</feature>
<feature type="topological domain" description="Cytoplasmic" evidence="3">
    <location>
        <begin position="251"/>
        <end position="315"/>
    </location>
</feature>
<feature type="transmembrane region" description="Helical; Name=7" evidence="3">
    <location>
        <begin position="316"/>
        <end position="336"/>
    </location>
</feature>
<feature type="topological domain" description="Extracellular" evidence="3">
    <location>
        <begin position="337"/>
        <end position="350"/>
    </location>
</feature>
<feature type="transmembrane region" description="Helical; Name=8" evidence="3">
    <location>
        <begin position="351"/>
        <end position="371"/>
    </location>
</feature>
<feature type="topological domain" description="Cytoplasmic" evidence="3">
    <location>
        <begin position="372"/>
        <end position="379"/>
    </location>
</feature>
<feature type="transmembrane region" description="Helical; Name=9" evidence="3">
    <location>
        <begin position="380"/>
        <end position="400"/>
    </location>
</feature>
<feature type="topological domain" description="Extracellular" evidence="3">
    <location>
        <begin position="401"/>
        <end position="413"/>
    </location>
</feature>
<feature type="transmembrane region" description="Helical; Name=10" evidence="3">
    <location>
        <begin position="414"/>
        <end position="434"/>
    </location>
</feature>
<feature type="topological domain" description="Cytoplasmic" evidence="3">
    <location>
        <begin position="435"/>
        <end position="445"/>
    </location>
</feature>
<feature type="transmembrane region" description="Helical; Name=11" evidence="3">
    <location>
        <begin position="446"/>
        <end position="466"/>
    </location>
</feature>
<feature type="topological domain" description="Extracellular" evidence="3">
    <location>
        <begin position="467"/>
        <end position="471"/>
    </location>
</feature>
<feature type="transmembrane region" description="Helical; Name=12" evidence="3">
    <location>
        <begin position="472"/>
        <end position="492"/>
    </location>
</feature>
<feature type="topological domain" description="Cytoplasmic" evidence="3">
    <location>
        <begin position="493"/>
        <end position="533"/>
    </location>
</feature>
<feature type="binding site" evidence="2">
    <location>
        <position position="205"/>
    </location>
    <ligand>
        <name>D-glucose</name>
        <dbReference type="ChEBI" id="CHEBI:4167"/>
    </ligand>
</feature>
<feature type="binding site" evidence="2">
    <location>
        <begin position="326"/>
        <end position="327"/>
    </location>
    <ligand>
        <name>D-glucose</name>
        <dbReference type="ChEBI" id="CHEBI:4167"/>
    </ligand>
</feature>
<feature type="binding site" evidence="2">
    <location>
        <position position="332"/>
    </location>
    <ligand>
        <name>D-glucose</name>
        <dbReference type="ChEBI" id="CHEBI:4167"/>
    </ligand>
</feature>
<feature type="binding site" evidence="2">
    <location>
        <position position="361"/>
    </location>
    <ligand>
        <name>D-glucose</name>
        <dbReference type="ChEBI" id="CHEBI:4167"/>
    </ligand>
</feature>
<feature type="binding site" evidence="2">
    <location>
        <position position="424"/>
    </location>
    <ligand>
        <name>D-glucose</name>
        <dbReference type="ChEBI" id="CHEBI:4167"/>
    </ligand>
</feature>
<feature type="binding site" evidence="2">
    <location>
        <position position="432"/>
    </location>
    <ligand>
        <name>D-glucose</name>
        <dbReference type="ChEBI" id="CHEBI:4167"/>
    </ligand>
</feature>
<feature type="glycosylation site" description="N-linked (GlcNAc...) asparagine" evidence="3">
    <location>
        <position position="64"/>
    </location>
</feature>
<feature type="glycosylation site" description="N-linked (GlcNAc...) asparagine" evidence="3">
    <location>
        <position position="69"/>
    </location>
</feature>
<dbReference type="EMBL" id="Z22932">
    <property type="protein sequence ID" value="CAA80519.1"/>
    <property type="molecule type" value="mRNA"/>
</dbReference>
<dbReference type="PIR" id="S43230">
    <property type="entry name" value="S43230"/>
</dbReference>
<dbReference type="RefSeq" id="NP_997061.1">
    <property type="nucleotide sequence ID" value="NM_207178.1"/>
</dbReference>
<dbReference type="SMR" id="Q90592"/>
<dbReference type="FunCoup" id="Q90592">
    <property type="interactions" value="38"/>
</dbReference>
<dbReference type="STRING" id="9031.ENSGALP00000015129"/>
<dbReference type="GlyCosmos" id="Q90592">
    <property type="glycosylation" value="2 sites, No reported glycans"/>
</dbReference>
<dbReference type="GlyGen" id="Q90592">
    <property type="glycosylation" value="2 sites"/>
</dbReference>
<dbReference type="PaxDb" id="9031-ENSGALP00000015129"/>
<dbReference type="GeneID" id="396272"/>
<dbReference type="KEGG" id="gga:396272"/>
<dbReference type="CTD" id="6514"/>
<dbReference type="VEuPathDB" id="HostDB:geneid_396272"/>
<dbReference type="eggNOG" id="KOG0569">
    <property type="taxonomic scope" value="Eukaryota"/>
</dbReference>
<dbReference type="InParanoid" id="Q90592"/>
<dbReference type="OrthoDB" id="4540492at2759"/>
<dbReference type="PhylomeDB" id="Q90592"/>
<dbReference type="Reactome" id="R-GGA-352832">
    <property type="pathway name" value="Glucose transport"/>
</dbReference>
<dbReference type="PRO" id="PR:Q90592"/>
<dbReference type="Proteomes" id="UP000000539">
    <property type="component" value="Unassembled WGS sequence"/>
</dbReference>
<dbReference type="GO" id="GO:0005903">
    <property type="term" value="C:brush border"/>
    <property type="evidence" value="ECO:0000318"/>
    <property type="project" value="GO_Central"/>
</dbReference>
<dbReference type="GO" id="GO:0005886">
    <property type="term" value="C:plasma membrane"/>
    <property type="evidence" value="ECO:0000250"/>
    <property type="project" value="UniProtKB"/>
</dbReference>
<dbReference type="GO" id="GO:0055056">
    <property type="term" value="F:D-glucose transmembrane transporter activity"/>
    <property type="evidence" value="ECO:0000250"/>
    <property type="project" value="UniProtKB"/>
</dbReference>
<dbReference type="GO" id="GO:0033300">
    <property type="term" value="F:dehydroascorbic acid transmembrane transporter activity"/>
    <property type="evidence" value="ECO:0000250"/>
    <property type="project" value="UniProtKB"/>
</dbReference>
<dbReference type="GO" id="GO:0005353">
    <property type="term" value="F:fructose transmembrane transporter activity"/>
    <property type="evidence" value="ECO:0000250"/>
    <property type="project" value="UniProtKB"/>
</dbReference>
<dbReference type="GO" id="GO:0005354">
    <property type="term" value="F:galactose transmembrane transporter activity"/>
    <property type="evidence" value="ECO:0000250"/>
    <property type="project" value="UniProtKB"/>
</dbReference>
<dbReference type="GO" id="GO:0046323">
    <property type="term" value="P:D-glucose import"/>
    <property type="evidence" value="ECO:0000318"/>
    <property type="project" value="GO_Central"/>
</dbReference>
<dbReference type="GO" id="GO:1904659">
    <property type="term" value="P:D-glucose transmembrane transport"/>
    <property type="evidence" value="ECO:0000250"/>
    <property type="project" value="UniProtKB"/>
</dbReference>
<dbReference type="GO" id="GO:0070837">
    <property type="term" value="P:dehydroascorbic acid transport"/>
    <property type="evidence" value="ECO:0000318"/>
    <property type="project" value="GO_Central"/>
</dbReference>
<dbReference type="GO" id="GO:0015755">
    <property type="term" value="P:fructose transmembrane transport"/>
    <property type="evidence" value="ECO:0000250"/>
    <property type="project" value="UniProtKB"/>
</dbReference>
<dbReference type="GO" id="GO:0015757">
    <property type="term" value="P:galactose transmembrane transport"/>
    <property type="evidence" value="ECO:0000250"/>
    <property type="project" value="UniProtKB"/>
</dbReference>
<dbReference type="CDD" id="cd17431">
    <property type="entry name" value="MFS_GLUT_Class1"/>
    <property type="match status" value="1"/>
</dbReference>
<dbReference type="FunFam" id="1.20.1250.20:FF:001450">
    <property type="entry name" value="Solute carrier family 2, facilitated glucose transporter member 2"/>
    <property type="match status" value="1"/>
</dbReference>
<dbReference type="Gene3D" id="1.20.1250.20">
    <property type="entry name" value="MFS general substrate transporter like domains"/>
    <property type="match status" value="2"/>
</dbReference>
<dbReference type="InterPro" id="IPR002440">
    <property type="entry name" value="Glc_transpt_2"/>
</dbReference>
<dbReference type="InterPro" id="IPR045263">
    <property type="entry name" value="GLUT"/>
</dbReference>
<dbReference type="InterPro" id="IPR020846">
    <property type="entry name" value="MFS_dom"/>
</dbReference>
<dbReference type="InterPro" id="IPR005828">
    <property type="entry name" value="MFS_sugar_transport-like"/>
</dbReference>
<dbReference type="InterPro" id="IPR036259">
    <property type="entry name" value="MFS_trans_sf"/>
</dbReference>
<dbReference type="InterPro" id="IPR003663">
    <property type="entry name" value="Sugar/inositol_transpt"/>
</dbReference>
<dbReference type="InterPro" id="IPR005829">
    <property type="entry name" value="Sugar_transporter_CS"/>
</dbReference>
<dbReference type="NCBIfam" id="TIGR00879">
    <property type="entry name" value="SP"/>
    <property type="match status" value="1"/>
</dbReference>
<dbReference type="PANTHER" id="PTHR23503">
    <property type="entry name" value="SOLUTE CARRIER FAMILY 2"/>
    <property type="match status" value="1"/>
</dbReference>
<dbReference type="PANTHER" id="PTHR23503:SF27">
    <property type="entry name" value="SOLUTE CARRIER FAMILY 2, FACILITATED GLUCOSE TRANSPORTER MEMBER 2"/>
    <property type="match status" value="1"/>
</dbReference>
<dbReference type="Pfam" id="PF00083">
    <property type="entry name" value="Sugar_tr"/>
    <property type="match status" value="1"/>
</dbReference>
<dbReference type="PRINTS" id="PR01191">
    <property type="entry name" value="GLUCTRSPORT2"/>
</dbReference>
<dbReference type="PRINTS" id="PR00171">
    <property type="entry name" value="SUGRTRNSPORT"/>
</dbReference>
<dbReference type="SUPFAM" id="SSF103473">
    <property type="entry name" value="MFS general substrate transporter"/>
    <property type="match status" value="1"/>
</dbReference>
<dbReference type="PROSITE" id="PS50850">
    <property type="entry name" value="MFS"/>
    <property type="match status" value="1"/>
</dbReference>
<dbReference type="PROSITE" id="PS00216">
    <property type="entry name" value="SUGAR_TRANSPORT_1"/>
    <property type="match status" value="1"/>
</dbReference>
<dbReference type="PROSITE" id="PS00217">
    <property type="entry name" value="SUGAR_TRANSPORT_2"/>
    <property type="match status" value="1"/>
</dbReference>
<comment type="function">
    <text evidence="1">Facilitative hexose transporter that mediates the transport of glucose, fructose and galactose. Likely mediates the bidirectional transfer of glucose across the plasma membrane of hepatocytes and is responsible for uptake of glucose by the beta cells.</text>
</comment>
<comment type="catalytic activity">
    <reaction evidence="1">
        <text>D-glucose(out) = D-glucose(in)</text>
        <dbReference type="Rhea" id="RHEA:60376"/>
        <dbReference type="ChEBI" id="CHEBI:4167"/>
    </reaction>
</comment>
<comment type="catalytic activity">
    <reaction evidence="1">
        <text>D-fructose(out) = D-fructose(in)</text>
        <dbReference type="Rhea" id="RHEA:60372"/>
        <dbReference type="ChEBI" id="CHEBI:37721"/>
    </reaction>
</comment>
<comment type="catalytic activity">
    <reaction evidence="1">
        <text>L-dehydroascorbate(out) = L-dehydroascorbate(in)</text>
        <dbReference type="Rhea" id="RHEA:60380"/>
        <dbReference type="ChEBI" id="CHEBI:58539"/>
    </reaction>
</comment>
<comment type="catalytic activity">
    <reaction evidence="1">
        <text>D-galactose(in) = D-galactose(out)</text>
        <dbReference type="Rhea" id="RHEA:34915"/>
        <dbReference type="ChEBI" id="CHEBI:4139"/>
    </reaction>
</comment>
<comment type="activity regulation">
    <text evidence="1">D-glucose and maltose competitively inhibit fructose transport. D-glucose, D-fructose and maltose inhibit deoxyglucose transport.</text>
</comment>
<comment type="subcellular location">
    <subcellularLocation>
        <location evidence="1">Cell membrane</location>
        <topology evidence="3">Multi-pass membrane protein</topology>
    </subcellularLocation>
</comment>
<comment type="similarity">
    <text evidence="5">Belongs to the major facilitator superfamily. Sugar transporter (TC 2.A.1.1) family. Glucose transporter subfamily.</text>
</comment>
<keyword id="KW-1003">Cell membrane</keyword>
<keyword id="KW-0325">Glycoprotein</keyword>
<keyword id="KW-0472">Membrane</keyword>
<keyword id="KW-1185">Reference proteome</keyword>
<keyword id="KW-0762">Sugar transport</keyword>
<keyword id="KW-0812">Transmembrane</keyword>
<keyword id="KW-1133">Transmembrane helix</keyword>
<keyword id="KW-0813">Transport</keyword>
<accession>Q90592</accession>